<sequence>ADCSATGDTCDHTKKCCDDCYTCRCGTPWGANCRCDYYKARCDT</sequence>
<accession>P34079</accession>
<organism>
    <name type="scientific">Plectreurys tristis</name>
    <name type="common">Spider</name>
    <name type="synonym">Plectreurys bispinosus</name>
    <dbReference type="NCBI Taxonomy" id="33319"/>
    <lineage>
        <taxon>Eukaryota</taxon>
        <taxon>Metazoa</taxon>
        <taxon>Ecdysozoa</taxon>
        <taxon>Arthropoda</taxon>
        <taxon>Chelicerata</taxon>
        <taxon>Arachnida</taxon>
        <taxon>Araneae</taxon>
        <taxon>Araneomorphae</taxon>
        <taxon>Haplogynae</taxon>
        <taxon>Pholcoidea</taxon>
        <taxon>Plectreuridae</taxon>
        <taxon>Plectreurys</taxon>
    </lineage>
</organism>
<dbReference type="PIR" id="S38275">
    <property type="entry name" value="S38275"/>
</dbReference>
<dbReference type="SMR" id="P34079"/>
<dbReference type="ArachnoServer" id="AS000412">
    <property type="toxin name" value="omega-plectoxin-Pt1a"/>
</dbReference>
<dbReference type="GO" id="GO:0005576">
    <property type="term" value="C:extracellular region"/>
    <property type="evidence" value="ECO:0007669"/>
    <property type="project" value="UniProtKB-SubCell"/>
</dbReference>
<dbReference type="GO" id="GO:0044231">
    <property type="term" value="C:host cell presynaptic membrane"/>
    <property type="evidence" value="ECO:0007669"/>
    <property type="project" value="UniProtKB-KW"/>
</dbReference>
<dbReference type="GO" id="GO:0005246">
    <property type="term" value="F:calcium channel regulator activity"/>
    <property type="evidence" value="ECO:0007669"/>
    <property type="project" value="UniProtKB-KW"/>
</dbReference>
<dbReference type="GO" id="GO:0090729">
    <property type="term" value="F:toxin activity"/>
    <property type="evidence" value="ECO:0007669"/>
    <property type="project" value="UniProtKB-KW"/>
</dbReference>
<reference key="1">
    <citation type="journal article" date="1993" name="Nature">
        <title>Fatty acylated toxin structure.</title>
        <authorList>
            <person name="Brantona W.D."/>
            <person name="Rudnick M.S."/>
            <person name="Zhou Y."/>
            <person name="Eccleston E.D."/>
            <person name="Fields G.B."/>
            <person name="Bowers L.D."/>
        </authorList>
    </citation>
    <scope>PROTEIN SEQUENCE</scope>
    <scope>FUNCTION</scope>
    <scope>PALMITOYLATION AT THR-44</scope>
    <scope>AMIDATION AT THR-44</scope>
    <source>
        <tissue>Venom</tissue>
    </source>
</reference>
<reference key="2">
    <citation type="journal article" date="1987" name="J. Neurosci.">
        <title>Neurotoxins from Plectreurys spider venom are potent presynaptic blockers in Drosophila.</title>
        <authorList>
            <person name="Branton W.D."/>
            <person name="Kolton L."/>
            <person name="Jan Y.N."/>
            <person name="Jan L.Y."/>
        </authorList>
    </citation>
    <scope>FUNCTION</scope>
</reference>
<keyword id="KW-0027">Amidation</keyword>
<keyword id="KW-0108">Calcium channel impairing toxin</keyword>
<keyword id="KW-0903">Direct protein sequencing</keyword>
<keyword id="KW-1015">Disulfide bond</keyword>
<keyword id="KW-0872">Ion channel impairing toxin</keyword>
<keyword id="KW-0960">Knottin</keyword>
<keyword id="KW-0449">Lipoprotein</keyword>
<keyword id="KW-0528">Neurotoxin</keyword>
<keyword id="KW-0564">Palmitate</keyword>
<keyword id="KW-0638">Presynaptic neurotoxin</keyword>
<keyword id="KW-0964">Secreted</keyword>
<keyword id="KW-0800">Toxin</keyword>
<keyword id="KW-1218">Voltage-gated calcium channel impairing toxin</keyword>
<proteinExistence type="evidence at protein level"/>
<feature type="chain" id="PRO_0000087657" description="Omega-plectoxin-Pt1a">
    <location>
        <begin position="1"/>
        <end position="44"/>
    </location>
</feature>
<feature type="modified residue" description="Threonine amide" evidence="3">
    <location>
        <position position="44"/>
    </location>
</feature>
<feature type="lipid moiety-binding region" description="O-palmitoyl threonine" evidence="3">
    <location>
        <position position="44"/>
    </location>
</feature>
<feature type="disulfide bond" evidence="1">
    <location>
        <begin position="3"/>
        <end position="17"/>
    </location>
</feature>
<feature type="disulfide bond" evidence="1">
    <location>
        <begin position="10"/>
        <end position="23"/>
    </location>
</feature>
<feature type="disulfide bond" evidence="1">
    <location>
        <begin position="16"/>
        <end position="35"/>
    </location>
</feature>
<feature type="disulfide bond" evidence="1">
    <location>
        <begin position="20"/>
        <end position="42"/>
    </location>
</feature>
<feature type="disulfide bond" evidence="1">
    <location>
        <begin position="25"/>
        <end position="33"/>
    </location>
</feature>
<comment type="function">
    <text evidence="2 3">Toxin that inhibits presynaptic voltage-gated calcium channel (Cav) in Drosophila nerve terminals, most likely through specific block of the Cav2 channel (known as Dmca1A).</text>
</comment>
<comment type="subcellular location">
    <subcellularLocation>
        <location>Secreted</location>
    </subcellularLocation>
</comment>
<comment type="tissue specificity">
    <text>Expressed by the venom gland.</text>
</comment>
<comment type="domain">
    <text evidence="4">The presence of a 'disulfide through disulfide knot' structurally defines this protein as a knottin.</text>
</comment>
<comment type="PTM">
    <text evidence="4">Contains 5 disulfide bonds.</text>
</comment>
<comment type="PTM">
    <text evidence="3">Acylation by palmitate is required for biological activity.</text>
</comment>
<comment type="similarity">
    <text>Belongs to the neurotoxin 02 (plectoxin) family. 02 (plectoxin) subfamily.</text>
</comment>
<evidence type="ECO:0000250" key="1">
    <source>
        <dbReference type="UniProtKB" id="P83559"/>
    </source>
</evidence>
<evidence type="ECO:0000269" key="2">
    <source>
    </source>
</evidence>
<evidence type="ECO:0000269" key="3">
    <source>
    </source>
</evidence>
<evidence type="ECO:0000305" key="4"/>
<protein>
    <recommendedName>
        <fullName>Omega-plectoxin-Pt1a</fullName>
        <shortName>Omega-PLTX-Pt1a</shortName>
    </recommendedName>
    <alternativeName>
        <fullName>PLTX-II</fullName>
    </alternativeName>
    <alternativeName>
        <fullName>Toxin PLTX-2</fullName>
    </alternativeName>
</protein>
<name>TX22A_PLETR</name>